<protein>
    <recommendedName>
        <fullName>Phosphoenolpyruvate carboxylase</fullName>
        <shortName>PEPC</shortName>
        <shortName>PEPCase</shortName>
        <ecNumber>4.1.1.31</ecNumber>
    </recommendedName>
</protein>
<dbReference type="EC" id="4.1.1.31"/>
<dbReference type="EMBL" id="BA000022">
    <property type="protein sequence ID" value="BAA18393.1"/>
    <property type="molecule type" value="Genomic_DNA"/>
</dbReference>
<dbReference type="PIR" id="S76134">
    <property type="entry name" value="S76134"/>
</dbReference>
<dbReference type="SMR" id="P74299"/>
<dbReference type="DIP" id="DIP-48802N"/>
<dbReference type="IntAct" id="P74299">
    <property type="interactions" value="5"/>
</dbReference>
<dbReference type="STRING" id="1148.gene:10499269"/>
<dbReference type="PaxDb" id="1148-1653480"/>
<dbReference type="EnsemblBacteria" id="BAA18393">
    <property type="protein sequence ID" value="BAA18393"/>
    <property type="gene ID" value="BAA18393"/>
</dbReference>
<dbReference type="KEGG" id="syn:sll0920"/>
<dbReference type="eggNOG" id="COG2352">
    <property type="taxonomic scope" value="Bacteria"/>
</dbReference>
<dbReference type="InParanoid" id="P74299"/>
<dbReference type="PhylomeDB" id="P74299"/>
<dbReference type="BRENDA" id="4.1.1.31">
    <property type="organism ID" value="6192"/>
</dbReference>
<dbReference type="Proteomes" id="UP000001425">
    <property type="component" value="Chromosome"/>
</dbReference>
<dbReference type="GO" id="GO:0005829">
    <property type="term" value="C:cytosol"/>
    <property type="evidence" value="ECO:0000318"/>
    <property type="project" value="GO_Central"/>
</dbReference>
<dbReference type="GO" id="GO:0000287">
    <property type="term" value="F:magnesium ion binding"/>
    <property type="evidence" value="ECO:0007669"/>
    <property type="project" value="UniProtKB-UniRule"/>
</dbReference>
<dbReference type="GO" id="GO:0008964">
    <property type="term" value="F:phosphoenolpyruvate carboxylase activity"/>
    <property type="evidence" value="ECO:0000318"/>
    <property type="project" value="GO_Central"/>
</dbReference>
<dbReference type="GO" id="GO:0015977">
    <property type="term" value="P:carbon fixation"/>
    <property type="evidence" value="ECO:0007669"/>
    <property type="project" value="UniProtKB-UniRule"/>
</dbReference>
<dbReference type="GO" id="GO:0006107">
    <property type="term" value="P:oxaloacetate metabolic process"/>
    <property type="evidence" value="ECO:0007669"/>
    <property type="project" value="UniProtKB-UniRule"/>
</dbReference>
<dbReference type="GO" id="GO:0006099">
    <property type="term" value="P:tricarboxylic acid cycle"/>
    <property type="evidence" value="ECO:0007669"/>
    <property type="project" value="InterPro"/>
</dbReference>
<dbReference type="Gene3D" id="1.20.1440.90">
    <property type="entry name" value="Phosphoenolpyruvate/pyruvate domain"/>
    <property type="match status" value="1"/>
</dbReference>
<dbReference type="HAMAP" id="MF_00595">
    <property type="entry name" value="PEPcase_type1"/>
    <property type="match status" value="1"/>
</dbReference>
<dbReference type="InterPro" id="IPR021135">
    <property type="entry name" value="PEP_COase"/>
</dbReference>
<dbReference type="InterPro" id="IPR022805">
    <property type="entry name" value="PEP_COase_bac/pln-type"/>
</dbReference>
<dbReference type="InterPro" id="IPR018129">
    <property type="entry name" value="PEP_COase_Lys_AS"/>
</dbReference>
<dbReference type="InterPro" id="IPR033129">
    <property type="entry name" value="PEPCASE_His_AS"/>
</dbReference>
<dbReference type="InterPro" id="IPR015813">
    <property type="entry name" value="Pyrv/PenolPyrv_kinase-like_dom"/>
</dbReference>
<dbReference type="NCBIfam" id="NF000584">
    <property type="entry name" value="PRK00009.1"/>
    <property type="match status" value="1"/>
</dbReference>
<dbReference type="PANTHER" id="PTHR30523">
    <property type="entry name" value="PHOSPHOENOLPYRUVATE CARBOXYLASE"/>
    <property type="match status" value="1"/>
</dbReference>
<dbReference type="PANTHER" id="PTHR30523:SF6">
    <property type="entry name" value="PHOSPHOENOLPYRUVATE CARBOXYLASE"/>
    <property type="match status" value="1"/>
</dbReference>
<dbReference type="Pfam" id="PF00311">
    <property type="entry name" value="PEPcase"/>
    <property type="match status" value="1"/>
</dbReference>
<dbReference type="PRINTS" id="PR00150">
    <property type="entry name" value="PEPCARBXLASE"/>
</dbReference>
<dbReference type="SUPFAM" id="SSF51621">
    <property type="entry name" value="Phosphoenolpyruvate/pyruvate domain"/>
    <property type="match status" value="1"/>
</dbReference>
<dbReference type="PROSITE" id="PS00781">
    <property type="entry name" value="PEPCASE_1"/>
    <property type="match status" value="1"/>
</dbReference>
<dbReference type="PROSITE" id="PS00393">
    <property type="entry name" value="PEPCASE_2"/>
    <property type="match status" value="1"/>
</dbReference>
<organism>
    <name type="scientific">Synechocystis sp. (strain ATCC 27184 / PCC 6803 / Kazusa)</name>
    <dbReference type="NCBI Taxonomy" id="1111708"/>
    <lineage>
        <taxon>Bacteria</taxon>
        <taxon>Bacillati</taxon>
        <taxon>Cyanobacteriota</taxon>
        <taxon>Cyanophyceae</taxon>
        <taxon>Synechococcales</taxon>
        <taxon>Merismopediaceae</taxon>
        <taxon>Synechocystis</taxon>
    </lineage>
</organism>
<evidence type="ECO:0000250" key="1"/>
<evidence type="ECO:0000305" key="2"/>
<accession>P74299</accession>
<name>CAPP_SYNY3</name>
<proteinExistence type="inferred from homology"/>
<comment type="function">
    <text evidence="1">Forms oxaloacetate, a four-carbon dicarboxylic acid source for the tricarboxylic acid cycle.</text>
</comment>
<comment type="catalytic activity">
    <reaction>
        <text>oxaloacetate + phosphate = phosphoenolpyruvate + hydrogencarbonate</text>
        <dbReference type="Rhea" id="RHEA:28370"/>
        <dbReference type="ChEBI" id="CHEBI:16452"/>
        <dbReference type="ChEBI" id="CHEBI:17544"/>
        <dbReference type="ChEBI" id="CHEBI:43474"/>
        <dbReference type="ChEBI" id="CHEBI:58702"/>
        <dbReference type="EC" id="4.1.1.31"/>
    </reaction>
</comment>
<comment type="cofactor">
    <cofactor evidence="1">
        <name>Mg(2+)</name>
        <dbReference type="ChEBI" id="CHEBI:18420"/>
    </cofactor>
</comment>
<comment type="similarity">
    <text evidence="2">Belongs to the PEPCase type 1 family.</text>
</comment>
<gene>
    <name type="primary">ppc</name>
    <name type="ordered locus">sll0920</name>
</gene>
<sequence length="1034" mass="118940">MNLAVPAFGLSTNWSGNGNGSNSEEESVLYQRLKMVEELWERVLQSECGQELVDLLTELRLQGTHEAITSEISEEVIMGITQRIEHLELNDAIRAARAFALYFQLINIVEQHYEQNEQQRNRWEASQETNFYEQAGNEEEMVPPSRLGASTEPLPVGIDQNELQASVGTFHWLMRELKRLNVPPQHIQNLLDHLDIRLVITAHPTEIVRHTIRRKQRRVDRILRKLDQLQGSVTGRDWLNTWDAKTAIAQLTEEIRFWWRTDELHQFKPTVLDEVDYSLHYFDEVLFDAVPELSKRLGQAIKETFPHLRAPRANFCYFGSWVGGDRDGNPSVTPEVTWQTACYQRGLVLGKYLFSLGELVAILSPSLHWCKVSQELLDSLERDRIQLPEIYEELSLRYRQEPYRMKLAYVTKRLENTLRRNNRLANPEERQTMITMPAENHYRTGEELLEELRLIQRNLTETGLTCLELENLITQLEVYGFNLAQLDFRQESSRHAEAIAEIAEYMGVLTTPYEEMAEEDKLAWLGVELQTRRPLIPQEMPFSERTRETIETLRTLRHLQMEFGVDICQTYIISMTNDASDVLEVLLLAKEAGLYDPATASNSLRIVPLFETVEDLKNAPGIMDSLFSLPFYRATLAGSYHSLKELQNQPPDYYQIPTTTALLNPGNLQEIMVGYSDSNKDSGFLSSNWEIHKAQKSLQAVAQSHRVILRLFHGRGGSVGRGGGPAYKAILAQPAGTVDGRIKITEQGEVLASKYSLPELALYNLETLTTAVIQASLLKSSFDFIEPWNRIMEELACTARRAYRSLIYEEPDFLDFFLTVTPIPEISELQISSRPARRKGGKADLSSLRAIPWVFSWTQTRFLLPAWYGVGTALKSFVDQDPVKNMKLLRYFYFKWPFFNMVISKVEMTLSKVDLTIASHYVQELSKPEDRERFDRLFQQIKQEYQLTRDFAMEITAHPHLLDGDRSLQRSVLLRNRTIVPLGLLQISLLKRLRQVTQEAETSGVRYRRYSKEELLRGALLTINGIAAGMRNTG</sequence>
<reference key="1">
    <citation type="journal article" date="1996" name="DNA Res.">
        <title>Sequence analysis of the genome of the unicellular cyanobacterium Synechocystis sp. strain PCC6803. II. Sequence determination of the entire genome and assignment of potential protein-coding regions.</title>
        <authorList>
            <person name="Kaneko T."/>
            <person name="Sato S."/>
            <person name="Kotani H."/>
            <person name="Tanaka A."/>
            <person name="Asamizu E."/>
            <person name="Nakamura Y."/>
            <person name="Miyajima N."/>
            <person name="Hirosawa M."/>
            <person name="Sugiura M."/>
            <person name="Sasamoto S."/>
            <person name="Kimura T."/>
            <person name="Hosouchi T."/>
            <person name="Matsuno A."/>
            <person name="Muraki A."/>
            <person name="Nakazaki N."/>
            <person name="Naruo K."/>
            <person name="Okumura S."/>
            <person name="Shimpo S."/>
            <person name="Takeuchi C."/>
            <person name="Wada T."/>
            <person name="Watanabe A."/>
            <person name="Yamada M."/>
            <person name="Yasuda M."/>
            <person name="Tabata S."/>
        </authorList>
    </citation>
    <scope>NUCLEOTIDE SEQUENCE [LARGE SCALE GENOMIC DNA]</scope>
    <source>
        <strain>ATCC 27184 / PCC 6803 / Kazusa</strain>
    </source>
</reference>
<keyword id="KW-0120">Carbon dioxide fixation</keyword>
<keyword id="KW-0456">Lyase</keyword>
<keyword id="KW-0460">Magnesium</keyword>
<keyword id="KW-1185">Reference proteome</keyword>
<feature type="chain" id="PRO_0000166642" description="Phosphoenolpyruvate carboxylase">
    <location>
        <begin position="1"/>
        <end position="1034"/>
    </location>
</feature>
<feature type="active site" evidence="1">
    <location>
        <position position="203"/>
    </location>
</feature>
<feature type="active site" evidence="1">
    <location>
        <position position="680"/>
    </location>
</feature>